<evidence type="ECO:0000250" key="1"/>
<evidence type="ECO:0000255" key="2">
    <source>
        <dbReference type="PROSITE-ProRule" id="PRU01210"/>
    </source>
</evidence>
<evidence type="ECO:0000305" key="3"/>
<keyword id="KW-1015">Disulfide bond</keyword>
<keyword id="KW-0872">Ion channel impairing toxin</keyword>
<keyword id="KW-0528">Neurotoxin</keyword>
<keyword id="KW-0964">Secreted</keyword>
<keyword id="KW-0800">Toxin</keyword>
<keyword id="KW-0738">Voltage-gated sodium channel impairing toxin</keyword>
<name>SCNA2_TITDI</name>
<feature type="chain" id="PRO_0000393386" description="Toxin TdNa2">
    <location>
        <begin position="1"/>
        <end position="60"/>
    </location>
</feature>
<feature type="domain" description="LCN-type CS-alpha/beta" evidence="2">
    <location>
        <begin position="1"/>
        <end position="59"/>
    </location>
</feature>
<feature type="disulfide bond" evidence="2">
    <location>
        <begin position="11"/>
        <end position="58"/>
    </location>
</feature>
<feature type="disulfide bond" evidence="2">
    <location>
        <begin position="15"/>
        <end position="37"/>
    </location>
</feature>
<feature type="disulfide bond" evidence="2">
    <location>
        <begin position="23"/>
        <end position="42"/>
    </location>
</feature>
<feature type="disulfide bond" evidence="2">
    <location>
        <begin position="27"/>
        <end position="44"/>
    </location>
</feature>
<reference key="1">
    <citation type="journal article" date="2009" name="Biochimie">
        <title>Molecular cloning and nucleotide sequence analysis of genes from a cDNA library of the scorpion Tityus discrepans.</title>
        <authorList>
            <person name="D'Suze G."/>
            <person name="Schwartz E.F."/>
            <person name="Garcia-Gomez B.I."/>
            <person name="Sevcik C."/>
            <person name="Possani L.D."/>
        </authorList>
    </citation>
    <scope>NUCLEOTIDE SEQUENCE [MRNA]</scope>
    <source>
        <tissue>Venom gland</tissue>
    </source>
</reference>
<reference key="2">
    <citation type="journal article" date="2012" name="PLoS ONE">
        <title>Identification and phylogenetic analysis of Tityus pachyurus and Tityus obscurus novel putative Na+-channel scorpion toxins.</title>
        <authorList>
            <person name="Guerrero-Vargas J.A."/>
            <person name="Mourao C.B."/>
            <person name="Quintero-Hernandez V."/>
            <person name="Possani L.D."/>
            <person name="Schwartz E.F."/>
        </authorList>
    </citation>
    <scope>NOMENCLATURE</scope>
</reference>
<protein>
    <recommendedName>
        <fullName>Toxin TdNa2</fullName>
    </recommendedName>
    <alternativeName>
        <fullName>T-Arthr*-beta* NaTx2.3</fullName>
    </alternativeName>
</protein>
<proteinExistence type="evidence at transcript level"/>
<accession>C9X4K0</accession>
<comment type="function">
    <text evidence="1">Inhibits the sodium currents (Nav) in an apparent irreversible manner. Produces small depolarization and induces repetitive firing in squid axons. Is specific for arthropods (crickets, triatomides, crabs and squids), but is non-toxic to mice (By similarity).</text>
</comment>
<comment type="subcellular location">
    <subcellularLocation>
        <location>Secreted</location>
    </subcellularLocation>
</comment>
<comment type="tissue specificity">
    <text>Expressed by the venom gland.</text>
</comment>
<comment type="domain">
    <text evidence="3">Has the structural arrangement of an alpha-helix connected to antiparallel beta-sheets by disulfide bonds (CS-alpha/beta).</text>
</comment>
<comment type="similarity">
    <text evidence="3">Belongs to the long (4 C-C) scorpion toxin superfamily. Sodium channel inhibitor family. Beta subfamily.</text>
</comment>
<organism>
    <name type="scientific">Tityus discrepans</name>
    <name type="common">Venezuelan scorpion</name>
    <dbReference type="NCBI Taxonomy" id="57059"/>
    <lineage>
        <taxon>Eukaryota</taxon>
        <taxon>Metazoa</taxon>
        <taxon>Ecdysozoa</taxon>
        <taxon>Arthropoda</taxon>
        <taxon>Chelicerata</taxon>
        <taxon>Arachnida</taxon>
        <taxon>Scorpiones</taxon>
        <taxon>Buthida</taxon>
        <taxon>Buthoidea</taxon>
        <taxon>Buthidae</taxon>
        <taxon>Tityus</taxon>
    </lineage>
</organism>
<sequence length="60" mass="6761">RDAYPADWRGCKPSCPWGSSSWCNEECTSLGGSSGYCAWPACWCYGLPDSVRYYNNKCHK</sequence>
<dbReference type="EMBL" id="FN392278">
    <property type="protein sequence ID" value="CAY61929.1"/>
    <property type="molecule type" value="mRNA"/>
</dbReference>
<dbReference type="SMR" id="C9X4K0"/>
<dbReference type="GO" id="GO:0005576">
    <property type="term" value="C:extracellular region"/>
    <property type="evidence" value="ECO:0007669"/>
    <property type="project" value="UniProtKB-SubCell"/>
</dbReference>
<dbReference type="GO" id="GO:0019871">
    <property type="term" value="F:sodium channel inhibitor activity"/>
    <property type="evidence" value="ECO:0007669"/>
    <property type="project" value="InterPro"/>
</dbReference>
<dbReference type="GO" id="GO:0090729">
    <property type="term" value="F:toxin activity"/>
    <property type="evidence" value="ECO:0007669"/>
    <property type="project" value="UniProtKB-KW"/>
</dbReference>
<dbReference type="GO" id="GO:0006952">
    <property type="term" value="P:defense response"/>
    <property type="evidence" value="ECO:0007669"/>
    <property type="project" value="InterPro"/>
</dbReference>
<dbReference type="CDD" id="cd23106">
    <property type="entry name" value="neurotoxins_LC_scorpion"/>
    <property type="match status" value="1"/>
</dbReference>
<dbReference type="Gene3D" id="3.30.30.10">
    <property type="entry name" value="Knottin, scorpion toxin-like"/>
    <property type="match status" value="1"/>
</dbReference>
<dbReference type="InterPro" id="IPR044062">
    <property type="entry name" value="LCN-type_CS_alpha_beta_dom"/>
</dbReference>
<dbReference type="InterPro" id="IPR003614">
    <property type="entry name" value="Scorpion_toxin-like"/>
</dbReference>
<dbReference type="InterPro" id="IPR036574">
    <property type="entry name" value="Scorpion_toxin-like_sf"/>
</dbReference>
<dbReference type="InterPro" id="IPR018218">
    <property type="entry name" value="Scorpion_toxinL"/>
</dbReference>
<dbReference type="InterPro" id="IPR002061">
    <property type="entry name" value="Scorpion_toxinL/defensin"/>
</dbReference>
<dbReference type="Pfam" id="PF00537">
    <property type="entry name" value="Toxin_3"/>
    <property type="match status" value="1"/>
</dbReference>
<dbReference type="PRINTS" id="PR00285">
    <property type="entry name" value="SCORPNTOXIN"/>
</dbReference>
<dbReference type="SMART" id="SM00505">
    <property type="entry name" value="Knot1"/>
    <property type="match status" value="1"/>
</dbReference>
<dbReference type="SUPFAM" id="SSF57095">
    <property type="entry name" value="Scorpion toxin-like"/>
    <property type="match status" value="1"/>
</dbReference>
<dbReference type="PROSITE" id="PS51863">
    <property type="entry name" value="LCN_CSAB"/>
    <property type="match status" value="1"/>
</dbReference>